<proteinExistence type="inferred from homology"/>
<comment type="function">
    <text evidence="1">ATP-dependent specificity component of the Clp protease. It directs the protease to specific substrates. Can perform chaperone functions in the absence of ClpP.</text>
</comment>
<comment type="subunit">
    <text evidence="1">Component of the ClpX-ClpP complex. Forms a hexameric ring that, in the presence of ATP, binds to fourteen ClpP subunits assembled into a disk-like structure with a central cavity, resembling the structure of eukaryotic proteasomes.</text>
</comment>
<comment type="similarity">
    <text evidence="1">Belongs to the ClpX chaperone family.</text>
</comment>
<gene>
    <name evidence="1" type="primary">clpX</name>
    <name type="ordered locus">Rru_A1551</name>
</gene>
<protein>
    <recommendedName>
        <fullName evidence="1">ATP-dependent Clp protease ATP-binding subunit ClpX</fullName>
    </recommendedName>
</protein>
<sequence>MSKSSGGDSKNTLYCSFCGKSQHEVRKLIAGPTVFICDECVELCMDIIREEHKTSLVKSRDGVPSPKDILKVLDDYVIGQQHAKKVLSVAVHNHYKRLSQAGKNSDVELAKSNILLIGPTGCGKTLLAQTLARILDVPFTMADATTLTEAGYVGEDVENIILKLLQASDYNVERAQRGIVYIDEIDKISRKSDNPSITRDVSGEGVQQALLKIMEGTVASVPPQGGRKHPQQEFLQVDTTNILFICGGAFAGLDRIISARGKGSSIGFGADVRDPEARRTGEVLRAVEPEDLLKYGLIPEFVGRLPVLATLDDLDEDALVDILTTPKNALVKQYQRLFEMESTQLSFKEDALRCIALKAIARKTGARGLRSIMEGILLDTMFDLPGMEGVEEVVVNKEVVEGRAKPLFIYSDQRTSADGASA</sequence>
<reference key="1">
    <citation type="journal article" date="2011" name="Stand. Genomic Sci.">
        <title>Complete genome sequence of Rhodospirillum rubrum type strain (S1).</title>
        <authorList>
            <person name="Munk A.C."/>
            <person name="Copeland A."/>
            <person name="Lucas S."/>
            <person name="Lapidus A."/>
            <person name="Del Rio T.G."/>
            <person name="Barry K."/>
            <person name="Detter J.C."/>
            <person name="Hammon N."/>
            <person name="Israni S."/>
            <person name="Pitluck S."/>
            <person name="Brettin T."/>
            <person name="Bruce D."/>
            <person name="Han C."/>
            <person name="Tapia R."/>
            <person name="Gilna P."/>
            <person name="Schmutz J."/>
            <person name="Larimer F."/>
            <person name="Land M."/>
            <person name="Kyrpides N.C."/>
            <person name="Mavromatis K."/>
            <person name="Richardson P."/>
            <person name="Rohde M."/>
            <person name="Goeker M."/>
            <person name="Klenk H.P."/>
            <person name="Zhang Y."/>
            <person name="Roberts G.P."/>
            <person name="Reslewic S."/>
            <person name="Schwartz D.C."/>
        </authorList>
    </citation>
    <scope>NUCLEOTIDE SEQUENCE [LARGE SCALE GENOMIC DNA]</scope>
    <source>
        <strain>ATCC 11170 / ATH 1.1.1 / DSM 467 / LMG 4362 / NCIMB 8255 / S1</strain>
    </source>
</reference>
<keyword id="KW-0067">ATP-binding</keyword>
<keyword id="KW-0143">Chaperone</keyword>
<keyword id="KW-0479">Metal-binding</keyword>
<keyword id="KW-0547">Nucleotide-binding</keyword>
<keyword id="KW-1185">Reference proteome</keyword>
<keyword id="KW-0862">Zinc</keyword>
<organism>
    <name type="scientific">Rhodospirillum rubrum (strain ATCC 11170 / ATH 1.1.1 / DSM 467 / LMG 4362 / NCIMB 8255 / S1)</name>
    <dbReference type="NCBI Taxonomy" id="269796"/>
    <lineage>
        <taxon>Bacteria</taxon>
        <taxon>Pseudomonadati</taxon>
        <taxon>Pseudomonadota</taxon>
        <taxon>Alphaproteobacteria</taxon>
        <taxon>Rhodospirillales</taxon>
        <taxon>Rhodospirillaceae</taxon>
        <taxon>Rhodospirillum</taxon>
    </lineage>
</organism>
<name>CLPX_RHORT</name>
<feature type="chain" id="PRO_1000024637" description="ATP-dependent Clp protease ATP-binding subunit ClpX">
    <location>
        <begin position="1"/>
        <end position="422"/>
    </location>
</feature>
<feature type="domain" description="ClpX-type ZB" evidence="2">
    <location>
        <begin position="3"/>
        <end position="56"/>
    </location>
</feature>
<feature type="binding site" evidence="2">
    <location>
        <position position="15"/>
    </location>
    <ligand>
        <name>Zn(2+)</name>
        <dbReference type="ChEBI" id="CHEBI:29105"/>
    </ligand>
</feature>
<feature type="binding site" evidence="2">
    <location>
        <position position="18"/>
    </location>
    <ligand>
        <name>Zn(2+)</name>
        <dbReference type="ChEBI" id="CHEBI:29105"/>
    </ligand>
</feature>
<feature type="binding site" evidence="2">
    <location>
        <position position="37"/>
    </location>
    <ligand>
        <name>Zn(2+)</name>
        <dbReference type="ChEBI" id="CHEBI:29105"/>
    </ligand>
</feature>
<feature type="binding site" evidence="2">
    <location>
        <position position="40"/>
    </location>
    <ligand>
        <name>Zn(2+)</name>
        <dbReference type="ChEBI" id="CHEBI:29105"/>
    </ligand>
</feature>
<feature type="binding site" evidence="1">
    <location>
        <begin position="119"/>
        <end position="126"/>
    </location>
    <ligand>
        <name>ATP</name>
        <dbReference type="ChEBI" id="CHEBI:30616"/>
    </ligand>
</feature>
<evidence type="ECO:0000255" key="1">
    <source>
        <dbReference type="HAMAP-Rule" id="MF_00175"/>
    </source>
</evidence>
<evidence type="ECO:0000255" key="2">
    <source>
        <dbReference type="PROSITE-ProRule" id="PRU01250"/>
    </source>
</evidence>
<accession>Q2RU44</accession>
<dbReference type="EMBL" id="CP000230">
    <property type="protein sequence ID" value="ABC22351.1"/>
    <property type="molecule type" value="Genomic_DNA"/>
</dbReference>
<dbReference type="RefSeq" id="WP_011389426.1">
    <property type="nucleotide sequence ID" value="NC_007643.1"/>
</dbReference>
<dbReference type="RefSeq" id="YP_426638.1">
    <property type="nucleotide sequence ID" value="NC_007643.1"/>
</dbReference>
<dbReference type="SMR" id="Q2RU44"/>
<dbReference type="STRING" id="269796.Rru_A1551"/>
<dbReference type="EnsemblBacteria" id="ABC22351">
    <property type="protein sequence ID" value="ABC22351"/>
    <property type="gene ID" value="Rru_A1551"/>
</dbReference>
<dbReference type="KEGG" id="rru:Rru_A1551"/>
<dbReference type="PATRIC" id="fig|269796.9.peg.1621"/>
<dbReference type="eggNOG" id="COG1219">
    <property type="taxonomic scope" value="Bacteria"/>
</dbReference>
<dbReference type="HOGENOM" id="CLU_014218_8_2_5"/>
<dbReference type="PhylomeDB" id="Q2RU44"/>
<dbReference type="Proteomes" id="UP000001929">
    <property type="component" value="Chromosome"/>
</dbReference>
<dbReference type="GO" id="GO:0009376">
    <property type="term" value="C:HslUV protease complex"/>
    <property type="evidence" value="ECO:0007669"/>
    <property type="project" value="TreeGrafter"/>
</dbReference>
<dbReference type="GO" id="GO:0005524">
    <property type="term" value="F:ATP binding"/>
    <property type="evidence" value="ECO:0007669"/>
    <property type="project" value="UniProtKB-UniRule"/>
</dbReference>
<dbReference type="GO" id="GO:0016887">
    <property type="term" value="F:ATP hydrolysis activity"/>
    <property type="evidence" value="ECO:0007669"/>
    <property type="project" value="InterPro"/>
</dbReference>
<dbReference type="GO" id="GO:0140662">
    <property type="term" value="F:ATP-dependent protein folding chaperone"/>
    <property type="evidence" value="ECO:0007669"/>
    <property type="project" value="InterPro"/>
</dbReference>
<dbReference type="GO" id="GO:0046983">
    <property type="term" value="F:protein dimerization activity"/>
    <property type="evidence" value="ECO:0007669"/>
    <property type="project" value="InterPro"/>
</dbReference>
<dbReference type="GO" id="GO:0051082">
    <property type="term" value="F:unfolded protein binding"/>
    <property type="evidence" value="ECO:0007669"/>
    <property type="project" value="UniProtKB-UniRule"/>
</dbReference>
<dbReference type="GO" id="GO:0008270">
    <property type="term" value="F:zinc ion binding"/>
    <property type="evidence" value="ECO:0007669"/>
    <property type="project" value="InterPro"/>
</dbReference>
<dbReference type="GO" id="GO:0051301">
    <property type="term" value="P:cell division"/>
    <property type="evidence" value="ECO:0007669"/>
    <property type="project" value="TreeGrafter"/>
</dbReference>
<dbReference type="GO" id="GO:0051603">
    <property type="term" value="P:proteolysis involved in protein catabolic process"/>
    <property type="evidence" value="ECO:0007669"/>
    <property type="project" value="TreeGrafter"/>
</dbReference>
<dbReference type="CDD" id="cd19497">
    <property type="entry name" value="RecA-like_ClpX"/>
    <property type="match status" value="1"/>
</dbReference>
<dbReference type="FunFam" id="1.10.8.60:FF:000002">
    <property type="entry name" value="ATP-dependent Clp protease ATP-binding subunit ClpX"/>
    <property type="match status" value="1"/>
</dbReference>
<dbReference type="FunFam" id="3.40.50.300:FF:000005">
    <property type="entry name" value="ATP-dependent Clp protease ATP-binding subunit ClpX"/>
    <property type="match status" value="1"/>
</dbReference>
<dbReference type="Gene3D" id="1.10.8.60">
    <property type="match status" value="1"/>
</dbReference>
<dbReference type="Gene3D" id="6.20.220.10">
    <property type="entry name" value="ClpX chaperone, C4-type zinc finger domain"/>
    <property type="match status" value="1"/>
</dbReference>
<dbReference type="Gene3D" id="3.40.50.300">
    <property type="entry name" value="P-loop containing nucleotide triphosphate hydrolases"/>
    <property type="match status" value="1"/>
</dbReference>
<dbReference type="HAMAP" id="MF_00175">
    <property type="entry name" value="ClpX"/>
    <property type="match status" value="1"/>
</dbReference>
<dbReference type="InterPro" id="IPR003593">
    <property type="entry name" value="AAA+_ATPase"/>
</dbReference>
<dbReference type="InterPro" id="IPR050052">
    <property type="entry name" value="ATP-dep_Clp_protease_ClpX"/>
</dbReference>
<dbReference type="InterPro" id="IPR003959">
    <property type="entry name" value="ATPase_AAA_core"/>
</dbReference>
<dbReference type="InterPro" id="IPR019489">
    <property type="entry name" value="Clp_ATPase_C"/>
</dbReference>
<dbReference type="InterPro" id="IPR004487">
    <property type="entry name" value="Clp_protease_ATP-bd_su_ClpX"/>
</dbReference>
<dbReference type="InterPro" id="IPR046425">
    <property type="entry name" value="ClpX_bact"/>
</dbReference>
<dbReference type="InterPro" id="IPR027417">
    <property type="entry name" value="P-loop_NTPase"/>
</dbReference>
<dbReference type="InterPro" id="IPR010603">
    <property type="entry name" value="Znf_CppX_C4"/>
</dbReference>
<dbReference type="InterPro" id="IPR038366">
    <property type="entry name" value="Znf_CppX_C4_sf"/>
</dbReference>
<dbReference type="NCBIfam" id="TIGR00382">
    <property type="entry name" value="clpX"/>
    <property type="match status" value="1"/>
</dbReference>
<dbReference type="NCBIfam" id="NF003745">
    <property type="entry name" value="PRK05342.1"/>
    <property type="match status" value="1"/>
</dbReference>
<dbReference type="PANTHER" id="PTHR48102:SF7">
    <property type="entry name" value="ATP-DEPENDENT CLP PROTEASE ATP-BINDING SUBUNIT CLPX-LIKE, MITOCHONDRIAL"/>
    <property type="match status" value="1"/>
</dbReference>
<dbReference type="PANTHER" id="PTHR48102">
    <property type="entry name" value="ATP-DEPENDENT CLP PROTEASE ATP-BINDING SUBUNIT CLPX-LIKE, MITOCHONDRIAL-RELATED"/>
    <property type="match status" value="1"/>
</dbReference>
<dbReference type="Pfam" id="PF07724">
    <property type="entry name" value="AAA_2"/>
    <property type="match status" value="1"/>
</dbReference>
<dbReference type="Pfam" id="PF10431">
    <property type="entry name" value="ClpB_D2-small"/>
    <property type="match status" value="1"/>
</dbReference>
<dbReference type="Pfam" id="PF06689">
    <property type="entry name" value="zf-C4_ClpX"/>
    <property type="match status" value="1"/>
</dbReference>
<dbReference type="SMART" id="SM00382">
    <property type="entry name" value="AAA"/>
    <property type="match status" value="1"/>
</dbReference>
<dbReference type="SMART" id="SM01086">
    <property type="entry name" value="ClpB_D2-small"/>
    <property type="match status" value="1"/>
</dbReference>
<dbReference type="SMART" id="SM00994">
    <property type="entry name" value="zf-C4_ClpX"/>
    <property type="match status" value="1"/>
</dbReference>
<dbReference type="SUPFAM" id="SSF57716">
    <property type="entry name" value="Glucocorticoid receptor-like (DNA-binding domain)"/>
    <property type="match status" value="1"/>
</dbReference>
<dbReference type="SUPFAM" id="SSF52540">
    <property type="entry name" value="P-loop containing nucleoside triphosphate hydrolases"/>
    <property type="match status" value="1"/>
</dbReference>
<dbReference type="PROSITE" id="PS51902">
    <property type="entry name" value="CLPX_ZB"/>
    <property type="match status" value="1"/>
</dbReference>